<accession>P51074</accession>
<accession>Q9SBT3</accession>
<reference key="1">
    <citation type="submission" date="1999-09" db="EMBL/GenBank/DDBJ databases">
        <title>Cloning of the complete cDNA encoding annexin in strawberry fruit.</title>
        <authorList>
            <person name="Yang H.Y."/>
            <person name="Wang G.L."/>
            <person name="Xia R."/>
            <person name="Fang H.J."/>
            <person name="Jing S.X."/>
        </authorList>
    </citation>
    <scope>NUCLEOTIDE SEQUENCE [MRNA]</scope>
    <source>
        <strain>cv. All Star</strain>
        <tissue>Fruit</tissue>
    </source>
</reference>
<reference key="2">
    <citation type="journal article" date="1995" name="Plant Mol. Biol.">
        <title>Identification of mRNAs with enhanced expression in ripening strawberry fruit using polymerase chain reaction differential display.</title>
        <authorList>
            <person name="Wilkinson J.Q."/>
            <person name="Lanahan M.B."/>
            <person name="Conner T.W."/>
            <person name="Klee H.J."/>
        </authorList>
    </citation>
    <scope>NUCLEOTIDE SEQUENCE [MRNA] OF 44-314</scope>
    <source>
        <strain>cv. Pajaro</strain>
        <tissue>Fruit</tissue>
    </source>
</reference>
<organism>
    <name type="scientific">Fragaria ananassa</name>
    <name type="common">Strawberry</name>
    <name type="synonym">Fragaria chiloensis x Fragaria virginiana</name>
    <dbReference type="NCBI Taxonomy" id="3747"/>
    <lineage>
        <taxon>Eukaryota</taxon>
        <taxon>Viridiplantae</taxon>
        <taxon>Streptophyta</taxon>
        <taxon>Embryophyta</taxon>
        <taxon>Tracheophyta</taxon>
        <taxon>Spermatophyta</taxon>
        <taxon>Magnoliopsida</taxon>
        <taxon>eudicotyledons</taxon>
        <taxon>Gunneridae</taxon>
        <taxon>Pentapetalae</taxon>
        <taxon>rosids</taxon>
        <taxon>fabids</taxon>
        <taxon>Rosales</taxon>
        <taxon>Rosaceae</taxon>
        <taxon>Rosoideae</taxon>
        <taxon>Potentilleae</taxon>
        <taxon>Fragariinae</taxon>
        <taxon>Fragaria</taxon>
    </lineage>
</organism>
<comment type="tissue specificity">
    <text>Predominantly in developing fruit.</text>
</comment>
<comment type="developmental stage">
    <text>Expression is enhanced in ripening fruit.</text>
</comment>
<comment type="domain">
    <text>A pair of annexin repeats may form one binding site for calcium and phospholipid.</text>
</comment>
<comment type="similarity">
    <text evidence="3">Belongs to the annexin (TC 1.A.31.1) family.</text>
</comment>
<name>ANX4_FRAAN</name>
<evidence type="ECO:0000250" key="1">
    <source>
        <dbReference type="UniProtKB" id="P93157"/>
    </source>
</evidence>
<evidence type="ECO:0000255" key="2">
    <source>
        <dbReference type="PROSITE-ProRule" id="PRU01245"/>
    </source>
</evidence>
<evidence type="ECO:0000305" key="3"/>
<proteinExistence type="evidence at transcript level"/>
<keyword id="KW-0041">Annexin</keyword>
<keyword id="KW-0106">Calcium</keyword>
<keyword id="KW-0111">Calcium/phospholipid-binding</keyword>
<keyword id="KW-0479">Metal-binding</keyword>
<keyword id="KW-0677">Repeat</keyword>
<dbReference type="EMBL" id="AF188832">
    <property type="protein sequence ID" value="AAF01250.1"/>
    <property type="molecule type" value="mRNA"/>
</dbReference>
<dbReference type="EMBL" id="U19941">
    <property type="protein sequence ID" value="AAA79922.1"/>
    <property type="molecule type" value="mRNA"/>
</dbReference>
<dbReference type="PIR" id="S56674">
    <property type="entry name" value="S56674"/>
</dbReference>
<dbReference type="SMR" id="P51074"/>
<dbReference type="GO" id="GO:0005737">
    <property type="term" value="C:cytoplasm"/>
    <property type="evidence" value="ECO:0007669"/>
    <property type="project" value="TreeGrafter"/>
</dbReference>
<dbReference type="GO" id="GO:0005886">
    <property type="term" value="C:plasma membrane"/>
    <property type="evidence" value="ECO:0007669"/>
    <property type="project" value="TreeGrafter"/>
</dbReference>
<dbReference type="GO" id="GO:0005509">
    <property type="term" value="F:calcium ion binding"/>
    <property type="evidence" value="ECO:0000250"/>
    <property type="project" value="UniProtKB"/>
</dbReference>
<dbReference type="GO" id="GO:0005544">
    <property type="term" value="F:calcium-dependent phospholipid binding"/>
    <property type="evidence" value="ECO:0007669"/>
    <property type="project" value="UniProtKB-KW"/>
</dbReference>
<dbReference type="GO" id="GO:0001786">
    <property type="term" value="F:phosphatidylserine binding"/>
    <property type="evidence" value="ECO:0007669"/>
    <property type="project" value="TreeGrafter"/>
</dbReference>
<dbReference type="GO" id="GO:0009409">
    <property type="term" value="P:response to cold"/>
    <property type="evidence" value="ECO:0007669"/>
    <property type="project" value="TreeGrafter"/>
</dbReference>
<dbReference type="GO" id="GO:0009408">
    <property type="term" value="P:response to heat"/>
    <property type="evidence" value="ECO:0007669"/>
    <property type="project" value="TreeGrafter"/>
</dbReference>
<dbReference type="GO" id="GO:0009651">
    <property type="term" value="P:response to salt stress"/>
    <property type="evidence" value="ECO:0007669"/>
    <property type="project" value="TreeGrafter"/>
</dbReference>
<dbReference type="GO" id="GO:0009414">
    <property type="term" value="P:response to water deprivation"/>
    <property type="evidence" value="ECO:0007669"/>
    <property type="project" value="TreeGrafter"/>
</dbReference>
<dbReference type="FunFam" id="1.10.220.10:FF:000001">
    <property type="entry name" value="Annexin"/>
    <property type="match status" value="1"/>
</dbReference>
<dbReference type="FunFam" id="1.10.220.10:FF:000006">
    <property type="entry name" value="Annexin"/>
    <property type="match status" value="1"/>
</dbReference>
<dbReference type="FunFam" id="1.10.220.10:FF:000008">
    <property type="entry name" value="Annexin"/>
    <property type="match status" value="1"/>
</dbReference>
<dbReference type="FunFam" id="1.10.220.10:FF:000009">
    <property type="entry name" value="Annexin"/>
    <property type="match status" value="1"/>
</dbReference>
<dbReference type="Gene3D" id="1.10.220.10">
    <property type="entry name" value="Annexin"/>
    <property type="match status" value="4"/>
</dbReference>
<dbReference type="InterPro" id="IPR001464">
    <property type="entry name" value="Annexin"/>
</dbReference>
<dbReference type="InterPro" id="IPR018502">
    <property type="entry name" value="Annexin_repeat"/>
</dbReference>
<dbReference type="InterPro" id="IPR018252">
    <property type="entry name" value="Annexin_repeat_CS"/>
</dbReference>
<dbReference type="InterPro" id="IPR037104">
    <property type="entry name" value="Annexin_sf"/>
</dbReference>
<dbReference type="InterPro" id="IPR009118">
    <property type="entry name" value="AnnexinD_plant"/>
</dbReference>
<dbReference type="PANTHER" id="PTHR10502">
    <property type="entry name" value="ANNEXIN"/>
    <property type="match status" value="1"/>
</dbReference>
<dbReference type="PANTHER" id="PTHR10502:SF204">
    <property type="entry name" value="ANNEXIN"/>
    <property type="match status" value="1"/>
</dbReference>
<dbReference type="Pfam" id="PF00191">
    <property type="entry name" value="Annexin"/>
    <property type="match status" value="4"/>
</dbReference>
<dbReference type="PRINTS" id="PR00196">
    <property type="entry name" value="ANNEXIN"/>
</dbReference>
<dbReference type="PRINTS" id="PR01814">
    <property type="entry name" value="ANNEXINPLANT"/>
</dbReference>
<dbReference type="SMART" id="SM00335">
    <property type="entry name" value="ANX"/>
    <property type="match status" value="4"/>
</dbReference>
<dbReference type="SUPFAM" id="SSF47874">
    <property type="entry name" value="Annexin"/>
    <property type="match status" value="1"/>
</dbReference>
<dbReference type="PROSITE" id="PS00223">
    <property type="entry name" value="ANNEXIN_1"/>
    <property type="match status" value="1"/>
</dbReference>
<dbReference type="PROSITE" id="PS51897">
    <property type="entry name" value="ANNEXIN_2"/>
    <property type="match status" value="4"/>
</dbReference>
<sequence length="314" mass="35622">MATLVSPPNFCAKEDAEALRKSVKGWGTNEKAIISILGHRNAGQRKEIRAAYEQLYQEDLLKPLESELSGDFEKAVYRWTLDPADRDAVLANVAIKKSTDVYNVIIEISCIHSPEELLAVRRAYQLRYKHSVEEDLAAHTTGDIRKLLVALVTAYRYDGHEINAKLANSEADILHDAIKDKAFNHEEIIRILSTRSKTQLMATFNKYRDDQGISISKNLLEEGANDFQKALHTAIRCLNDPKKYFEKVLRNAIKRVGTDEDALTRVIVTRAERDLRDIKEVYYKKNSVPLEQAVAKDTSGDYKAFLLTLLGKED</sequence>
<feature type="chain" id="PRO_0000067520" description="Annexin-like protein RJ4">
    <location>
        <begin position="1"/>
        <end position="314"/>
    </location>
</feature>
<feature type="repeat" description="Annexin 1" evidence="2">
    <location>
        <begin position="10"/>
        <end position="81"/>
    </location>
</feature>
<feature type="repeat" description="Annexin 2" evidence="2">
    <location>
        <begin position="82"/>
        <end position="153"/>
    </location>
</feature>
<feature type="repeat" description="Annexin 3" evidence="2">
    <location>
        <begin position="165"/>
        <end position="236"/>
    </location>
</feature>
<feature type="repeat" description="Annexin 4" evidence="2">
    <location>
        <begin position="240"/>
        <end position="311"/>
    </location>
</feature>
<feature type="binding site" evidence="1">
    <location>
        <position position="25"/>
    </location>
    <ligand>
        <name>Ca(2+)</name>
        <dbReference type="ChEBI" id="CHEBI:29108"/>
        <label>1</label>
    </ligand>
</feature>
<feature type="binding site" evidence="1">
    <location>
        <position position="27"/>
    </location>
    <ligand>
        <name>Ca(2+)</name>
        <dbReference type="ChEBI" id="CHEBI:29108"/>
        <label>1</label>
    </ligand>
</feature>
<feature type="binding site" evidence="1">
    <location>
        <position position="67"/>
    </location>
    <ligand>
        <name>Ca(2+)</name>
        <dbReference type="ChEBI" id="CHEBI:29108"/>
        <label>1</label>
    </ligand>
</feature>
<feature type="binding site" evidence="1">
    <location>
        <position position="253"/>
    </location>
    <ligand>
        <name>Ca(2+)</name>
        <dbReference type="ChEBI" id="CHEBI:29108"/>
        <label>2</label>
    </ligand>
</feature>
<feature type="binding site" evidence="1">
    <location>
        <position position="255"/>
    </location>
    <ligand>
        <name>Ca(2+)</name>
        <dbReference type="ChEBI" id="CHEBI:29108"/>
        <label>2</label>
    </ligand>
</feature>
<feature type="binding site" evidence="1">
    <location>
        <position position="257"/>
    </location>
    <ligand>
        <name>Ca(2+)</name>
        <dbReference type="ChEBI" id="CHEBI:29108"/>
        <label>2</label>
    </ligand>
</feature>
<feature type="binding site" evidence="1">
    <location>
        <position position="297"/>
    </location>
    <ligand>
        <name>Ca(2+)</name>
        <dbReference type="ChEBI" id="CHEBI:29108"/>
        <label>2</label>
    </ligand>
</feature>
<feature type="binding site" evidence="1">
    <location>
        <position position="298"/>
    </location>
    <ligand>
        <name>Ca(2+)</name>
        <dbReference type="ChEBI" id="CHEBI:29108"/>
        <label>3</label>
    </ligand>
</feature>
<feature type="sequence conflict" description="In Ref. 2; AAA79922." evidence="3" ref="2">
    <original>Q</original>
    <variation>E</variation>
    <location>
        <position position="44"/>
    </location>
</feature>
<protein>
    <recommendedName>
        <fullName>Annexin-like protein RJ4</fullName>
    </recommendedName>
</protein>